<reference key="1">
    <citation type="journal article" date="1988" name="Eur. J. Biochem.">
        <title>Amino acid sequences of two nonspecific lipid-transfer proteins from germinated castor bean.</title>
        <authorList>
            <person name="Takishima K."/>
            <person name="Watanabe S."/>
            <person name="Yamada M."/>
            <person name="Suga T."/>
            <person name="Mamiya G."/>
        </authorList>
    </citation>
    <scope>PROTEIN SEQUENCE</scope>
    <source>
        <tissue>Seed</tissue>
    </source>
</reference>
<name>NLTPB_RICCO</name>
<accession>P10974</accession>
<dbReference type="PIR" id="S01795">
    <property type="entry name" value="S01795"/>
</dbReference>
<dbReference type="SMR" id="P10974"/>
<dbReference type="eggNOG" id="ENOG502S4CI">
    <property type="taxonomic scope" value="Eukaryota"/>
</dbReference>
<dbReference type="GO" id="GO:0008289">
    <property type="term" value="F:lipid binding"/>
    <property type="evidence" value="ECO:0007669"/>
    <property type="project" value="UniProtKB-KW"/>
</dbReference>
<dbReference type="GO" id="GO:0006869">
    <property type="term" value="P:lipid transport"/>
    <property type="evidence" value="ECO:0007669"/>
    <property type="project" value="InterPro"/>
</dbReference>
<dbReference type="CDD" id="cd01960">
    <property type="entry name" value="nsLTP1"/>
    <property type="match status" value="1"/>
</dbReference>
<dbReference type="Gene3D" id="1.10.110.10">
    <property type="entry name" value="Plant lipid-transfer and hydrophobic proteins"/>
    <property type="match status" value="1"/>
</dbReference>
<dbReference type="InterPro" id="IPR036312">
    <property type="entry name" value="Bifun_inhib/LTP/seed_sf"/>
</dbReference>
<dbReference type="InterPro" id="IPR016140">
    <property type="entry name" value="Bifunc_inhib/LTP/seed_store"/>
</dbReference>
<dbReference type="InterPro" id="IPR000528">
    <property type="entry name" value="Plant_nsLTP"/>
</dbReference>
<dbReference type="PANTHER" id="PTHR33076">
    <property type="entry name" value="NON-SPECIFIC LIPID-TRANSFER PROTEIN 2-RELATED"/>
    <property type="match status" value="1"/>
</dbReference>
<dbReference type="Pfam" id="PF00234">
    <property type="entry name" value="Tryp_alpha_amyl"/>
    <property type="match status" value="1"/>
</dbReference>
<dbReference type="PRINTS" id="PR00382">
    <property type="entry name" value="LIPIDTRNSFER"/>
</dbReference>
<dbReference type="SMART" id="SM00499">
    <property type="entry name" value="AAI"/>
    <property type="match status" value="1"/>
</dbReference>
<dbReference type="SUPFAM" id="SSF47699">
    <property type="entry name" value="Bifunctional inhibitor/lipid-transfer protein/seed storage 2S albumin"/>
    <property type="match status" value="1"/>
</dbReference>
<dbReference type="PROSITE" id="PS00597">
    <property type="entry name" value="PLANT_LTP"/>
    <property type="match status" value="1"/>
</dbReference>
<keyword id="KW-0903">Direct protein sequencing</keyword>
<keyword id="KW-1015">Disulfide bond</keyword>
<keyword id="KW-0446">Lipid-binding</keyword>
<keyword id="KW-0813">Transport</keyword>
<sequence>VNCGQVNKALSSCVPFLTGFDTTPSLTCCAGVMELKRLAPTVKDKRIACECVKTAAARYPNIREDAASSLPYKCGVVINVPISKTTNCHEIN</sequence>
<comment type="function">
    <text>Plant non-specific lipid-transfer proteins transfer phospholipids as well as galactolipids across membranes. May play a role in wax or cutin deposition in the cell walls of expanding epidermal cells and certain secretory tissues.</text>
</comment>
<comment type="similarity">
    <text evidence="2">Belongs to the plant LTP family.</text>
</comment>
<proteinExistence type="evidence at protein level"/>
<evidence type="ECO:0000250" key="1"/>
<evidence type="ECO:0000305" key="2"/>
<protein>
    <recommendedName>
        <fullName>Non-specific lipid-transfer protein B</fullName>
        <shortName>NS-LTP B</shortName>
    </recommendedName>
    <alternativeName>
        <fullName>Phospholipid transfer protein</fullName>
        <shortName>PLTP</shortName>
    </alternativeName>
</protein>
<organism>
    <name type="scientific">Ricinus communis</name>
    <name type="common">Castor bean</name>
    <dbReference type="NCBI Taxonomy" id="3988"/>
    <lineage>
        <taxon>Eukaryota</taxon>
        <taxon>Viridiplantae</taxon>
        <taxon>Streptophyta</taxon>
        <taxon>Embryophyta</taxon>
        <taxon>Tracheophyta</taxon>
        <taxon>Spermatophyta</taxon>
        <taxon>Magnoliopsida</taxon>
        <taxon>eudicotyledons</taxon>
        <taxon>Gunneridae</taxon>
        <taxon>Pentapetalae</taxon>
        <taxon>rosids</taxon>
        <taxon>fabids</taxon>
        <taxon>Malpighiales</taxon>
        <taxon>Euphorbiaceae</taxon>
        <taxon>Acalyphoideae</taxon>
        <taxon>Acalypheae</taxon>
        <taxon>Ricinus</taxon>
    </lineage>
</organism>
<feature type="chain" id="PRO_0000153883" description="Non-specific lipid-transfer protein B">
    <location>
        <begin position="1"/>
        <end position="92"/>
    </location>
</feature>
<feature type="disulfide bond" evidence="1">
    <location>
        <begin position="3"/>
        <end position="51"/>
    </location>
</feature>
<feature type="disulfide bond" evidence="1">
    <location>
        <begin position="13"/>
        <end position="28"/>
    </location>
</feature>
<feature type="disulfide bond" evidence="1">
    <location>
        <begin position="29"/>
        <end position="74"/>
    </location>
</feature>
<feature type="disulfide bond" evidence="1">
    <location>
        <begin position="49"/>
        <end position="88"/>
    </location>
</feature>